<gene>
    <name type="primary">cdsA</name>
    <name type="synonym">cds</name>
    <name type="ordered locus">aq_1249</name>
</gene>
<reference key="1">
    <citation type="journal article" date="1998" name="Nature">
        <title>The complete genome of the hyperthermophilic bacterium Aquifex aeolicus.</title>
        <authorList>
            <person name="Deckert G."/>
            <person name="Warren P.V."/>
            <person name="Gaasterland T."/>
            <person name="Young W.G."/>
            <person name="Lenox A.L."/>
            <person name="Graham D.E."/>
            <person name="Overbeek R."/>
            <person name="Snead M.A."/>
            <person name="Keller M."/>
            <person name="Aujay M."/>
            <person name="Huber R."/>
            <person name="Feldman R.A."/>
            <person name="Short J.M."/>
            <person name="Olsen G.J."/>
            <person name="Swanson R.V."/>
        </authorList>
    </citation>
    <scope>NUCLEOTIDE SEQUENCE [LARGE SCALE GENOMIC DNA]</scope>
    <source>
        <strain>VF5</strain>
    </source>
</reference>
<sequence length="259" mass="29486">MRITQGERESSGEFLMSREFYGVLIGVTTLLVIFLPKSLFLLVILFLCFAISREVSVALGENEVFYFSPLVLLTYYFADPLVFPLIGLLSLYFAYKRWELNSFFKSTFLLFYPALFLVYLIKIKEISTYYLLIFIFGIWINDVFAYYIGKNFGKTPLFPKISPKKTVEGFLGGVLFGSLFFALTLPYGILNSFLLGTFVLTVGVAGDYFKSFIKRQVGIKDFSNVFGEHGGFTDRFDALVFSAPVFYLIMCAGELNCKL</sequence>
<dbReference type="EC" id="2.7.7.41"/>
<dbReference type="EMBL" id="AE000657">
    <property type="protein sequence ID" value="AAC07246.1"/>
    <property type="molecule type" value="Genomic_DNA"/>
</dbReference>
<dbReference type="PIR" id="A70408">
    <property type="entry name" value="A70408"/>
</dbReference>
<dbReference type="RefSeq" id="NP_213856.1">
    <property type="nucleotide sequence ID" value="NC_000918.1"/>
</dbReference>
<dbReference type="SMR" id="O67292"/>
<dbReference type="STRING" id="224324.aq_1249"/>
<dbReference type="EnsemblBacteria" id="AAC07246">
    <property type="protein sequence ID" value="AAC07246"/>
    <property type="gene ID" value="aq_1249"/>
</dbReference>
<dbReference type="KEGG" id="aae:aq_1249"/>
<dbReference type="PATRIC" id="fig|224324.8.peg.973"/>
<dbReference type="eggNOG" id="COG0575">
    <property type="taxonomic scope" value="Bacteria"/>
</dbReference>
<dbReference type="HOGENOM" id="CLU_037294_2_1_0"/>
<dbReference type="InParanoid" id="O67292"/>
<dbReference type="OrthoDB" id="9799199at2"/>
<dbReference type="UniPathway" id="UPA00557">
    <property type="reaction ID" value="UER00614"/>
</dbReference>
<dbReference type="Proteomes" id="UP000000798">
    <property type="component" value="Chromosome"/>
</dbReference>
<dbReference type="GO" id="GO:0005886">
    <property type="term" value="C:plasma membrane"/>
    <property type="evidence" value="ECO:0000318"/>
    <property type="project" value="GO_Central"/>
</dbReference>
<dbReference type="GO" id="GO:0004605">
    <property type="term" value="F:phosphatidate cytidylyltransferase activity"/>
    <property type="evidence" value="ECO:0000318"/>
    <property type="project" value="GO_Central"/>
</dbReference>
<dbReference type="GO" id="GO:0016024">
    <property type="term" value="P:CDP-diacylglycerol biosynthetic process"/>
    <property type="evidence" value="ECO:0000318"/>
    <property type="project" value="GO_Central"/>
</dbReference>
<dbReference type="InterPro" id="IPR000374">
    <property type="entry name" value="PC_trans"/>
</dbReference>
<dbReference type="PANTHER" id="PTHR46382">
    <property type="entry name" value="PHOSPHATIDATE CYTIDYLYLTRANSFERASE"/>
    <property type="match status" value="1"/>
</dbReference>
<dbReference type="PANTHER" id="PTHR46382:SF1">
    <property type="entry name" value="PHOSPHATIDATE CYTIDYLYLTRANSFERASE"/>
    <property type="match status" value="1"/>
</dbReference>
<dbReference type="Pfam" id="PF01148">
    <property type="entry name" value="CTP_transf_1"/>
    <property type="match status" value="1"/>
</dbReference>
<dbReference type="PROSITE" id="PS01315">
    <property type="entry name" value="CDS"/>
    <property type="match status" value="1"/>
</dbReference>
<evidence type="ECO:0000250" key="1"/>
<evidence type="ECO:0000255" key="2"/>
<evidence type="ECO:0000305" key="3"/>
<protein>
    <recommendedName>
        <fullName>Phosphatidate cytidylyltransferase</fullName>
        <ecNumber>2.7.7.41</ecNumber>
    </recommendedName>
    <alternativeName>
        <fullName>CDP-DAG synthase</fullName>
    </alternativeName>
    <alternativeName>
        <fullName>CDP-DG synthase</fullName>
    </alternativeName>
    <alternativeName>
        <fullName>CDP-diacylglycerol synthase</fullName>
        <shortName>CDS</shortName>
    </alternativeName>
    <alternativeName>
        <fullName>CDP-diglyceride pyrophosphorylase</fullName>
    </alternativeName>
    <alternativeName>
        <fullName>CDP-diglyceride synthase</fullName>
    </alternativeName>
    <alternativeName>
        <fullName>CTP:phosphatidate cytidylyltransferase</fullName>
    </alternativeName>
</protein>
<accession>O67292</accession>
<comment type="catalytic activity">
    <reaction>
        <text>a 1,2-diacyl-sn-glycero-3-phosphate + CTP + H(+) = a CDP-1,2-diacyl-sn-glycerol + diphosphate</text>
        <dbReference type="Rhea" id="RHEA:16229"/>
        <dbReference type="ChEBI" id="CHEBI:15378"/>
        <dbReference type="ChEBI" id="CHEBI:33019"/>
        <dbReference type="ChEBI" id="CHEBI:37563"/>
        <dbReference type="ChEBI" id="CHEBI:58332"/>
        <dbReference type="ChEBI" id="CHEBI:58608"/>
        <dbReference type="EC" id="2.7.7.41"/>
    </reaction>
</comment>
<comment type="pathway">
    <text>Phospholipid metabolism; CDP-diacylglycerol biosynthesis; CDP-diacylglycerol from sn-glycerol 3-phosphate: step 3/3.</text>
</comment>
<comment type="subcellular location">
    <subcellularLocation>
        <location evidence="1">Cell membrane</location>
        <topology evidence="1">Multi-pass membrane protein</topology>
    </subcellularLocation>
</comment>
<comment type="similarity">
    <text evidence="3">Belongs to the CDS family.</text>
</comment>
<name>CDSA_AQUAE</name>
<proteinExistence type="inferred from homology"/>
<keyword id="KW-1003">Cell membrane</keyword>
<keyword id="KW-0444">Lipid biosynthesis</keyword>
<keyword id="KW-0443">Lipid metabolism</keyword>
<keyword id="KW-0472">Membrane</keyword>
<keyword id="KW-0548">Nucleotidyltransferase</keyword>
<keyword id="KW-0594">Phospholipid biosynthesis</keyword>
<keyword id="KW-1208">Phospholipid metabolism</keyword>
<keyword id="KW-1185">Reference proteome</keyword>
<keyword id="KW-0808">Transferase</keyword>
<keyword id="KW-0812">Transmembrane</keyword>
<keyword id="KW-1133">Transmembrane helix</keyword>
<feature type="chain" id="PRO_0000090725" description="Phosphatidate cytidylyltransferase">
    <location>
        <begin position="1"/>
        <end position="259"/>
    </location>
</feature>
<feature type="transmembrane region" description="Helical" evidence="2">
    <location>
        <begin position="31"/>
        <end position="51"/>
    </location>
</feature>
<feature type="transmembrane region" description="Helical" evidence="2">
    <location>
        <begin position="69"/>
        <end position="89"/>
    </location>
</feature>
<feature type="transmembrane region" description="Helical" evidence="2">
    <location>
        <begin position="103"/>
        <end position="123"/>
    </location>
</feature>
<feature type="transmembrane region" description="Helical" evidence="2">
    <location>
        <begin position="129"/>
        <end position="149"/>
    </location>
</feature>
<feature type="transmembrane region" description="Helical" evidence="2">
    <location>
        <begin position="170"/>
        <end position="190"/>
    </location>
</feature>
<feature type="transmembrane region" description="Helical" evidence="2">
    <location>
        <begin position="193"/>
        <end position="213"/>
    </location>
</feature>
<feature type="transmembrane region" description="Helical" evidence="2">
    <location>
        <begin position="236"/>
        <end position="256"/>
    </location>
</feature>
<organism>
    <name type="scientific">Aquifex aeolicus (strain VF5)</name>
    <dbReference type="NCBI Taxonomy" id="224324"/>
    <lineage>
        <taxon>Bacteria</taxon>
        <taxon>Pseudomonadati</taxon>
        <taxon>Aquificota</taxon>
        <taxon>Aquificia</taxon>
        <taxon>Aquificales</taxon>
        <taxon>Aquificaceae</taxon>
        <taxon>Aquifex</taxon>
    </lineage>
</organism>